<gene>
    <name type="primary">xdh</name>
    <name type="ORF">DDB_G0291047</name>
</gene>
<reference key="1">
    <citation type="journal article" date="2005" name="Nature">
        <title>The genome of the social amoeba Dictyostelium discoideum.</title>
        <authorList>
            <person name="Eichinger L."/>
            <person name="Pachebat J.A."/>
            <person name="Gloeckner G."/>
            <person name="Rajandream M.A."/>
            <person name="Sucgang R."/>
            <person name="Berriman M."/>
            <person name="Song J."/>
            <person name="Olsen R."/>
            <person name="Szafranski K."/>
            <person name="Xu Q."/>
            <person name="Tunggal B."/>
            <person name="Kummerfeld S."/>
            <person name="Madera M."/>
            <person name="Konfortov B.A."/>
            <person name="Rivero F."/>
            <person name="Bankier A.T."/>
            <person name="Lehmann R."/>
            <person name="Hamlin N."/>
            <person name="Davies R."/>
            <person name="Gaudet P."/>
            <person name="Fey P."/>
            <person name="Pilcher K."/>
            <person name="Chen G."/>
            <person name="Saunders D."/>
            <person name="Sodergren E.J."/>
            <person name="Davis P."/>
            <person name="Kerhornou A."/>
            <person name="Nie X."/>
            <person name="Hall N."/>
            <person name="Anjard C."/>
            <person name="Hemphill L."/>
            <person name="Bason N."/>
            <person name="Farbrother P."/>
            <person name="Desany B."/>
            <person name="Just E."/>
            <person name="Morio T."/>
            <person name="Rost R."/>
            <person name="Churcher C.M."/>
            <person name="Cooper J."/>
            <person name="Haydock S."/>
            <person name="van Driessche N."/>
            <person name="Cronin A."/>
            <person name="Goodhead I."/>
            <person name="Muzny D.M."/>
            <person name="Mourier T."/>
            <person name="Pain A."/>
            <person name="Lu M."/>
            <person name="Harper D."/>
            <person name="Lindsay R."/>
            <person name="Hauser H."/>
            <person name="James K.D."/>
            <person name="Quiles M."/>
            <person name="Madan Babu M."/>
            <person name="Saito T."/>
            <person name="Buchrieser C."/>
            <person name="Wardroper A."/>
            <person name="Felder M."/>
            <person name="Thangavelu M."/>
            <person name="Johnson D."/>
            <person name="Knights A."/>
            <person name="Loulseged H."/>
            <person name="Mungall K.L."/>
            <person name="Oliver K."/>
            <person name="Price C."/>
            <person name="Quail M.A."/>
            <person name="Urushihara H."/>
            <person name="Hernandez J."/>
            <person name="Rabbinowitsch E."/>
            <person name="Steffen D."/>
            <person name="Sanders M."/>
            <person name="Ma J."/>
            <person name="Kohara Y."/>
            <person name="Sharp S."/>
            <person name="Simmonds M.N."/>
            <person name="Spiegler S."/>
            <person name="Tivey A."/>
            <person name="Sugano S."/>
            <person name="White B."/>
            <person name="Walker D."/>
            <person name="Woodward J.R."/>
            <person name="Winckler T."/>
            <person name="Tanaka Y."/>
            <person name="Shaulsky G."/>
            <person name="Schleicher M."/>
            <person name="Weinstock G.M."/>
            <person name="Rosenthal A."/>
            <person name="Cox E.C."/>
            <person name="Chisholm R.L."/>
            <person name="Gibbs R.A."/>
            <person name="Loomis W.F."/>
            <person name="Platzer M."/>
            <person name="Kay R.R."/>
            <person name="Williams J.G."/>
            <person name="Dear P.H."/>
            <person name="Noegel A.A."/>
            <person name="Barrell B.G."/>
            <person name="Kuspa A."/>
        </authorList>
    </citation>
    <scope>NUCLEOTIDE SEQUENCE [LARGE SCALE GENOMIC DNA]</scope>
    <source>
        <strain>AX4</strain>
    </source>
</reference>
<accession>Q54FB7</accession>
<protein>
    <recommendedName>
        <fullName>Xanthine dehydrogenase</fullName>
        <shortName>XD</shortName>
        <ecNumber>1.17.1.4</ecNumber>
    </recommendedName>
</protein>
<name>XDH_DICDI</name>
<dbReference type="EC" id="1.17.1.4"/>
<dbReference type="EMBL" id="AAFI02000174">
    <property type="protein sequence ID" value="EAL61954.1"/>
    <property type="molecule type" value="Genomic_DNA"/>
</dbReference>
<dbReference type="RefSeq" id="XP_635420.1">
    <property type="nucleotide sequence ID" value="XM_630328.1"/>
</dbReference>
<dbReference type="SMR" id="Q54FB7"/>
<dbReference type="FunCoup" id="Q54FB7">
    <property type="interactions" value="93"/>
</dbReference>
<dbReference type="STRING" id="44689.Q54FB7"/>
<dbReference type="PaxDb" id="44689-DDB0230176"/>
<dbReference type="EnsemblProtists" id="EAL61954">
    <property type="protein sequence ID" value="EAL61954"/>
    <property type="gene ID" value="DDB_G0291047"/>
</dbReference>
<dbReference type="GeneID" id="8627921"/>
<dbReference type="KEGG" id="ddi:DDB_G0291047"/>
<dbReference type="dictyBase" id="DDB_G0291047">
    <property type="gene designation" value="xdh"/>
</dbReference>
<dbReference type="VEuPathDB" id="AmoebaDB:DDB_G0291047"/>
<dbReference type="eggNOG" id="KOG0430">
    <property type="taxonomic scope" value="Eukaryota"/>
</dbReference>
<dbReference type="HOGENOM" id="CLU_001681_1_2_1"/>
<dbReference type="InParanoid" id="Q54FB7"/>
<dbReference type="OMA" id="PHPTQER"/>
<dbReference type="PhylomeDB" id="Q54FB7"/>
<dbReference type="Reactome" id="R-DDI-74259">
    <property type="pathway name" value="Purine catabolism"/>
</dbReference>
<dbReference type="Reactome" id="R-DDI-964975">
    <property type="pathway name" value="Vitamin B6 activation to pyridoxal phosphate"/>
</dbReference>
<dbReference type="Reactome" id="R-DDI-9748787">
    <property type="pathway name" value="Azathioprine ADME"/>
</dbReference>
<dbReference type="PRO" id="PR:Q54FB7"/>
<dbReference type="Proteomes" id="UP000002195">
    <property type="component" value="Chromosome 5"/>
</dbReference>
<dbReference type="GO" id="GO:0005777">
    <property type="term" value="C:peroxisome"/>
    <property type="evidence" value="ECO:0007669"/>
    <property type="project" value="UniProtKB-SubCell"/>
</dbReference>
<dbReference type="GO" id="GO:0051537">
    <property type="term" value="F:2 iron, 2 sulfur cluster binding"/>
    <property type="evidence" value="ECO:0000250"/>
    <property type="project" value="UniProtKB"/>
</dbReference>
<dbReference type="GO" id="GO:0071949">
    <property type="term" value="F:FAD binding"/>
    <property type="evidence" value="ECO:0007669"/>
    <property type="project" value="InterPro"/>
</dbReference>
<dbReference type="GO" id="GO:0050660">
    <property type="term" value="F:flavin adenine dinucleotide binding"/>
    <property type="evidence" value="ECO:0000250"/>
    <property type="project" value="UniProtKB"/>
</dbReference>
<dbReference type="GO" id="GO:0005506">
    <property type="term" value="F:iron ion binding"/>
    <property type="evidence" value="ECO:0007669"/>
    <property type="project" value="InterPro"/>
</dbReference>
<dbReference type="GO" id="GO:0043546">
    <property type="term" value="F:molybdopterin cofactor binding"/>
    <property type="evidence" value="ECO:0000250"/>
    <property type="project" value="UniProtKB"/>
</dbReference>
<dbReference type="GO" id="GO:0016491">
    <property type="term" value="F:oxidoreductase activity"/>
    <property type="evidence" value="ECO:0000318"/>
    <property type="project" value="GO_Central"/>
</dbReference>
<dbReference type="GO" id="GO:0004854">
    <property type="term" value="F:xanthine dehydrogenase activity"/>
    <property type="evidence" value="ECO:0000250"/>
    <property type="project" value="UniProtKB"/>
</dbReference>
<dbReference type="GO" id="GO:0009115">
    <property type="term" value="P:xanthine catabolic process"/>
    <property type="evidence" value="ECO:0000250"/>
    <property type="project" value="UniProtKB"/>
</dbReference>
<dbReference type="CDD" id="cd00207">
    <property type="entry name" value="fer2"/>
    <property type="match status" value="1"/>
</dbReference>
<dbReference type="FunFam" id="3.30.365.10:FF:000003">
    <property type="entry name" value="Aldehyde oxidase 1"/>
    <property type="match status" value="1"/>
</dbReference>
<dbReference type="FunFam" id="3.90.1170.50:FF:000001">
    <property type="entry name" value="Aldehyde oxidase 1"/>
    <property type="match status" value="1"/>
</dbReference>
<dbReference type="FunFam" id="3.30.365.10:FF:000002">
    <property type="entry name" value="Xanthine dehydrogenase oxidase"/>
    <property type="match status" value="1"/>
</dbReference>
<dbReference type="FunFam" id="3.30.365.10:FF:000004">
    <property type="entry name" value="Xanthine dehydrogenase oxidase"/>
    <property type="match status" value="1"/>
</dbReference>
<dbReference type="FunFam" id="3.10.20.30:FF:000012">
    <property type="entry name" value="Xanthine dehydrogenase/oxidase"/>
    <property type="match status" value="1"/>
</dbReference>
<dbReference type="FunFam" id="3.30.43.10:FF:000001">
    <property type="entry name" value="Xanthine dehydrogenase/oxidase"/>
    <property type="match status" value="1"/>
</dbReference>
<dbReference type="FunFam" id="3.30.465.10:FF:000004">
    <property type="entry name" value="Xanthine dehydrogenase/oxidase"/>
    <property type="match status" value="1"/>
</dbReference>
<dbReference type="Gene3D" id="3.10.20.30">
    <property type="match status" value="1"/>
</dbReference>
<dbReference type="Gene3D" id="3.30.465.10">
    <property type="match status" value="1"/>
</dbReference>
<dbReference type="Gene3D" id="1.10.150.120">
    <property type="entry name" value="[2Fe-2S]-binding domain"/>
    <property type="match status" value="1"/>
</dbReference>
<dbReference type="Gene3D" id="3.90.1170.50">
    <property type="entry name" value="Aldehyde oxidase/xanthine dehydrogenase, a/b hammerhead"/>
    <property type="match status" value="1"/>
</dbReference>
<dbReference type="Gene3D" id="3.30.365.10">
    <property type="entry name" value="Aldehyde oxidase/xanthine dehydrogenase, molybdopterin binding domain"/>
    <property type="match status" value="4"/>
</dbReference>
<dbReference type="Gene3D" id="3.30.390.50">
    <property type="entry name" value="CO dehydrogenase flavoprotein, C-terminal domain"/>
    <property type="match status" value="1"/>
</dbReference>
<dbReference type="Gene3D" id="3.30.43.10">
    <property type="entry name" value="Uridine Diphospho-n-acetylenolpyruvylglucosamine Reductase, domain 2"/>
    <property type="match status" value="1"/>
</dbReference>
<dbReference type="InterPro" id="IPR002888">
    <property type="entry name" value="2Fe-2S-bd"/>
</dbReference>
<dbReference type="InterPro" id="IPR036884">
    <property type="entry name" value="2Fe-2S-bd_dom_sf"/>
</dbReference>
<dbReference type="InterPro" id="IPR036010">
    <property type="entry name" value="2Fe-2S_ferredoxin-like_sf"/>
</dbReference>
<dbReference type="InterPro" id="IPR001041">
    <property type="entry name" value="2Fe-2S_ferredoxin-type"/>
</dbReference>
<dbReference type="InterPro" id="IPR006058">
    <property type="entry name" value="2Fe2S_fd_BS"/>
</dbReference>
<dbReference type="InterPro" id="IPR000674">
    <property type="entry name" value="Ald_Oxase/Xan_DH_a/b"/>
</dbReference>
<dbReference type="InterPro" id="IPR036856">
    <property type="entry name" value="Ald_Oxase/Xan_DH_a/b_sf"/>
</dbReference>
<dbReference type="InterPro" id="IPR016208">
    <property type="entry name" value="Ald_Oxase/xanthine_DH-like"/>
</dbReference>
<dbReference type="InterPro" id="IPR008274">
    <property type="entry name" value="AldOxase/xan_DH_MoCoBD1"/>
</dbReference>
<dbReference type="InterPro" id="IPR046867">
    <property type="entry name" value="AldOxase/xan_DH_MoCoBD2"/>
</dbReference>
<dbReference type="InterPro" id="IPR037165">
    <property type="entry name" value="AldOxase/xan_DH_Mopterin-bd_sf"/>
</dbReference>
<dbReference type="InterPro" id="IPR012675">
    <property type="entry name" value="Beta-grasp_dom_sf"/>
</dbReference>
<dbReference type="InterPro" id="IPR005107">
    <property type="entry name" value="CO_DH_flav_C"/>
</dbReference>
<dbReference type="InterPro" id="IPR036683">
    <property type="entry name" value="CO_DH_flav_C_dom_sf"/>
</dbReference>
<dbReference type="InterPro" id="IPR016166">
    <property type="entry name" value="FAD-bd_PCMH"/>
</dbReference>
<dbReference type="InterPro" id="IPR036318">
    <property type="entry name" value="FAD-bd_PCMH-like_sf"/>
</dbReference>
<dbReference type="InterPro" id="IPR016167">
    <property type="entry name" value="FAD-bd_PCMH_sub1"/>
</dbReference>
<dbReference type="InterPro" id="IPR016169">
    <property type="entry name" value="FAD-bd_PCMH_sub2"/>
</dbReference>
<dbReference type="InterPro" id="IPR002346">
    <property type="entry name" value="Mopterin_DH_FAD-bd"/>
</dbReference>
<dbReference type="PANTHER" id="PTHR45444">
    <property type="entry name" value="XANTHINE DEHYDROGENASE"/>
    <property type="match status" value="1"/>
</dbReference>
<dbReference type="PANTHER" id="PTHR45444:SF3">
    <property type="entry name" value="XANTHINE DEHYDROGENASE"/>
    <property type="match status" value="1"/>
</dbReference>
<dbReference type="Pfam" id="PF01315">
    <property type="entry name" value="Ald_Xan_dh_C"/>
    <property type="match status" value="1"/>
</dbReference>
<dbReference type="Pfam" id="PF03450">
    <property type="entry name" value="CO_deh_flav_C"/>
    <property type="match status" value="1"/>
</dbReference>
<dbReference type="Pfam" id="PF00941">
    <property type="entry name" value="FAD_binding_5"/>
    <property type="match status" value="1"/>
</dbReference>
<dbReference type="Pfam" id="PF00111">
    <property type="entry name" value="Fer2"/>
    <property type="match status" value="1"/>
</dbReference>
<dbReference type="Pfam" id="PF01799">
    <property type="entry name" value="Fer2_2"/>
    <property type="match status" value="1"/>
</dbReference>
<dbReference type="Pfam" id="PF02738">
    <property type="entry name" value="MoCoBD_1"/>
    <property type="match status" value="1"/>
</dbReference>
<dbReference type="Pfam" id="PF20256">
    <property type="entry name" value="MoCoBD_2"/>
    <property type="match status" value="1"/>
</dbReference>
<dbReference type="PIRSF" id="PIRSF000127">
    <property type="entry name" value="Xanthine_DH"/>
    <property type="match status" value="1"/>
</dbReference>
<dbReference type="SMART" id="SM01008">
    <property type="entry name" value="Ald_Xan_dh_C"/>
    <property type="match status" value="1"/>
</dbReference>
<dbReference type="SMART" id="SM01092">
    <property type="entry name" value="CO_deh_flav_C"/>
    <property type="match status" value="1"/>
</dbReference>
<dbReference type="SUPFAM" id="SSF54292">
    <property type="entry name" value="2Fe-2S ferredoxin-like"/>
    <property type="match status" value="1"/>
</dbReference>
<dbReference type="SUPFAM" id="SSF55447">
    <property type="entry name" value="CO dehydrogenase flavoprotein C-terminal domain-like"/>
    <property type="match status" value="1"/>
</dbReference>
<dbReference type="SUPFAM" id="SSF47741">
    <property type="entry name" value="CO dehydrogenase ISP C-domain like"/>
    <property type="match status" value="1"/>
</dbReference>
<dbReference type="SUPFAM" id="SSF54665">
    <property type="entry name" value="CO dehydrogenase molybdoprotein N-domain-like"/>
    <property type="match status" value="1"/>
</dbReference>
<dbReference type="SUPFAM" id="SSF56176">
    <property type="entry name" value="FAD-binding/transporter-associated domain-like"/>
    <property type="match status" value="1"/>
</dbReference>
<dbReference type="SUPFAM" id="SSF56003">
    <property type="entry name" value="Molybdenum cofactor-binding domain"/>
    <property type="match status" value="1"/>
</dbReference>
<dbReference type="PROSITE" id="PS00197">
    <property type="entry name" value="2FE2S_FER_1"/>
    <property type="match status" value="1"/>
</dbReference>
<dbReference type="PROSITE" id="PS51085">
    <property type="entry name" value="2FE2S_FER_2"/>
    <property type="match status" value="1"/>
</dbReference>
<dbReference type="PROSITE" id="PS51387">
    <property type="entry name" value="FAD_PCMH"/>
    <property type="match status" value="1"/>
</dbReference>
<organism>
    <name type="scientific">Dictyostelium discoideum</name>
    <name type="common">Social amoeba</name>
    <dbReference type="NCBI Taxonomy" id="44689"/>
    <lineage>
        <taxon>Eukaryota</taxon>
        <taxon>Amoebozoa</taxon>
        <taxon>Evosea</taxon>
        <taxon>Eumycetozoa</taxon>
        <taxon>Dictyostelia</taxon>
        <taxon>Dictyosteliales</taxon>
        <taxon>Dictyosteliaceae</taxon>
        <taxon>Dictyostelium</taxon>
    </lineage>
</organism>
<comment type="function">
    <text evidence="1">Key enzyme in purine degradation. Catalyzes the oxidation of hypoxanthine to xanthine. Catalyzes the oxidation of xanthine to uric acid (By similarity).</text>
</comment>
<comment type="catalytic activity">
    <reaction>
        <text>xanthine + NAD(+) + H2O = urate + NADH + H(+)</text>
        <dbReference type="Rhea" id="RHEA:16669"/>
        <dbReference type="ChEBI" id="CHEBI:15377"/>
        <dbReference type="ChEBI" id="CHEBI:15378"/>
        <dbReference type="ChEBI" id="CHEBI:17712"/>
        <dbReference type="ChEBI" id="CHEBI:17775"/>
        <dbReference type="ChEBI" id="CHEBI:57540"/>
        <dbReference type="ChEBI" id="CHEBI:57945"/>
        <dbReference type="EC" id="1.17.1.4"/>
    </reaction>
</comment>
<comment type="catalytic activity">
    <reaction>
        <text>hypoxanthine + NAD(+) + H2O = xanthine + NADH + H(+)</text>
        <dbReference type="Rhea" id="RHEA:24670"/>
        <dbReference type="ChEBI" id="CHEBI:15377"/>
        <dbReference type="ChEBI" id="CHEBI:15378"/>
        <dbReference type="ChEBI" id="CHEBI:17368"/>
        <dbReference type="ChEBI" id="CHEBI:17712"/>
        <dbReference type="ChEBI" id="CHEBI:57540"/>
        <dbReference type="ChEBI" id="CHEBI:57945"/>
        <dbReference type="EC" id="1.17.1.4"/>
    </reaction>
</comment>
<comment type="cofactor">
    <cofactor evidence="1">
        <name>FAD</name>
        <dbReference type="ChEBI" id="CHEBI:57692"/>
    </cofactor>
</comment>
<comment type="cofactor">
    <cofactor evidence="1">
        <name>Mo-molybdopterin</name>
        <dbReference type="ChEBI" id="CHEBI:71302"/>
    </cofactor>
    <text evidence="1">Binds 1 Mo-molybdopterin (Mo-MPT) cofactor per subunit.</text>
</comment>
<comment type="cofactor">
    <cofactor evidence="2">
        <name>[2Fe-2S] cluster</name>
        <dbReference type="ChEBI" id="CHEBI:190135"/>
    </cofactor>
    <text evidence="2">Binds 2 [2Fe-2S] clusters per subunit.</text>
</comment>
<comment type="subunit">
    <text evidence="1">Homodimer.</text>
</comment>
<comment type="subcellular location">
    <subcellularLocation>
        <location evidence="1">Peroxisome</location>
    </subcellularLocation>
</comment>
<comment type="similarity">
    <text evidence="5">Belongs to the xanthine dehydrogenase family.</text>
</comment>
<sequence>MIDDENLNGKEPFLKKENQLLFFLNGEKVLINEPNPELSTLDYIRSIGLTGLKRGCSEGACGSCTFMLSNVVKDDNDTFRIVHRAVNGCLYPLCALDGMAVTTIEGLGNIDKGLHSIQERISENSGSQCGFCTPGIIMALYAFLRSNPNSTQKDIEQNFDGNLCRCTGYRPILDAAKSFANQPSDEQLVELPLPPMATIDDKKDDTQMICPGTGKPCNCKTKTSHIPNKPMELNSEPIFPPFLMEYKKESLKFTGSRVTWYTPTTLEELLKIKKEKTNAKIVVGNTEIGIETRFRSIVYPTIICPTRVEELIQIQKEDNGVRVGASVTLTEMKSYLNGIIKSSENDEIANKKNGTFKAIISQLKWFAGNQVRNAASIGGNLCTASPISDLNPVLLAAGAVLTMVSLDDNGAKVRRQVPINQFFLRYRVVDIKPEEILESVFIPYTRPLEFIQAYKQSRRREDDIAIVSCCFRVLLEPIAESASNTVDSNFKIKDCVLAYGGMNVKAVTCEKTEKQLIGSVWSRELLNDACLNLESDLPLAAGAPGGMIEYRRSLTTGFFFKYFLTVSKQLYQISNGNPLYLVSDKEKSATDAYSRPLSFGEQNYQTQPDKHPITQPIKHQSADKQVTGEALYVDDVKMKSLYAVMVPSLKAHANIKSVDASKALKAPGVKAFFSAKDIPGINDCGPVIHDEEVFVTKTALFHGAPIGCIVAETHIQALEASKLVAIEYEELPAITSIEDAISKQSFFPFTHLLKDGDMEKGWSESDHIIDGEFKVGAQEHFYLEPNGTLVIPGEGKELTVISSTQNPTKTQAIVASVLGIGQNQVVCKLKRLGGGFGGKETRSIFSSCVAAIASYHMKEPVRIILDRDTDMSTTGTRHPFIARYRVGFTKEGLIKALDLELYADAGFSYDISVGVLDRAIFHSENSYKIPNVNILGRLCKTNLPSNTAFRGYGGPQAMIICENWVEKISKTLGMDSYKIRELNFYKEAEVTAYRQSVVNNMMKRVWDELMVKSNYHQRLIAVEKFNKENRYKKRGISIIPTKFGMSFTVKTLNQAGALVHVYTDGTILVTHGGTEMGQGLNTKMIQIAARAFNVPVSDVFISETSTDKVPNTAPTAASVSSDLNGMAVLDACQQILLRMEPIREKNPNVPFKQLCTLCFVERVNLSANGFYATPNVGYMFKDSGVGEGTPFNYFNFGAACSEVEIDTLTGDHTTLRSDVILDVGDSLNPTIDIGQVEGAFVQGMGWSTLEEVVTFPSGYMFTRGPSTYKIPGFNDVPIEFNVSLLGDAPNPKAIHSSKGVGEPPLFLGSSVYFAIRQAITAARLENNLTNWFDLQSPATCERIRTSCLDNFVLQFRKQ</sequence>
<feature type="chain" id="PRO_0000327650" description="Xanthine dehydrogenase">
    <location>
        <begin position="1"/>
        <end position="1358"/>
    </location>
</feature>
<feature type="domain" description="2Fe-2S ferredoxin-type" evidence="3">
    <location>
        <begin position="18"/>
        <end position="107"/>
    </location>
</feature>
<feature type="domain" description="FAD-binding PCMH-type" evidence="4">
    <location>
        <begin position="253"/>
        <end position="447"/>
    </location>
</feature>
<feature type="active site" description="Proton acceptor" evidence="1">
    <location>
        <position position="1302"/>
    </location>
</feature>
<feature type="binding site" evidence="2">
    <location>
        <position position="56"/>
    </location>
    <ligand>
        <name>[2Fe-2S] cluster</name>
        <dbReference type="ChEBI" id="CHEBI:190135"/>
        <label>1</label>
    </ligand>
</feature>
<feature type="binding site" evidence="2">
    <location>
        <position position="61"/>
    </location>
    <ligand>
        <name>[2Fe-2S] cluster</name>
        <dbReference type="ChEBI" id="CHEBI:190135"/>
        <label>1</label>
    </ligand>
</feature>
<feature type="binding site" evidence="2">
    <location>
        <position position="64"/>
    </location>
    <ligand>
        <name>[2Fe-2S] cluster</name>
        <dbReference type="ChEBI" id="CHEBI:190135"/>
        <label>1</label>
    </ligand>
</feature>
<feature type="binding site" evidence="2">
    <location>
        <position position="89"/>
    </location>
    <ligand>
        <name>[2Fe-2S] cluster</name>
        <dbReference type="ChEBI" id="CHEBI:190135"/>
        <label>1</label>
    </ligand>
</feature>
<feature type="binding site" evidence="2">
    <location>
        <position position="129"/>
    </location>
    <ligand>
        <name>[2Fe-2S] cluster</name>
        <dbReference type="ChEBI" id="CHEBI:190135"/>
        <label>2</label>
    </ligand>
</feature>
<feature type="binding site" evidence="2">
    <location>
        <position position="132"/>
    </location>
    <ligand>
        <name>[2Fe-2S] cluster</name>
        <dbReference type="ChEBI" id="CHEBI:190135"/>
        <label>2</label>
    </ligand>
</feature>
<feature type="binding site" evidence="2">
    <location>
        <position position="164"/>
    </location>
    <ligand>
        <name>[2Fe-2S] cluster</name>
        <dbReference type="ChEBI" id="CHEBI:190135"/>
        <label>2</label>
    </ligand>
</feature>
<feature type="binding site" evidence="2">
    <location>
        <position position="166"/>
    </location>
    <ligand>
        <name>[2Fe-2S] cluster</name>
        <dbReference type="ChEBI" id="CHEBI:190135"/>
        <label>2</label>
    </ligand>
</feature>
<feature type="binding site" evidence="1">
    <location>
        <begin position="281"/>
        <end position="288"/>
    </location>
    <ligand>
        <name>FAD</name>
        <dbReference type="ChEBI" id="CHEBI:57692"/>
    </ligand>
</feature>
<feature type="binding site" evidence="1">
    <location>
        <position position="366"/>
    </location>
    <ligand>
        <name>FAD</name>
        <dbReference type="ChEBI" id="CHEBI:57692"/>
    </ligand>
</feature>
<feature type="binding site" evidence="1">
    <location>
        <begin position="376"/>
        <end position="380"/>
    </location>
    <ligand>
        <name>FAD</name>
        <dbReference type="ChEBI" id="CHEBI:57692"/>
    </ligand>
</feature>
<feature type="binding site" evidence="1">
    <location>
        <position position="389"/>
    </location>
    <ligand>
        <name>FAD</name>
        <dbReference type="ChEBI" id="CHEBI:57692"/>
    </ligand>
</feature>
<feature type="binding site" evidence="1">
    <location>
        <position position="437"/>
    </location>
    <ligand>
        <name>FAD</name>
        <dbReference type="ChEBI" id="CHEBI:57692"/>
    </ligand>
</feature>
<feature type="binding site" evidence="1">
    <location>
        <position position="455"/>
    </location>
    <ligand>
        <name>FAD</name>
        <dbReference type="ChEBI" id="CHEBI:57692"/>
    </ligand>
</feature>
<feature type="binding site" evidence="1">
    <location>
        <position position="805"/>
    </location>
    <ligand>
        <name>Mo-molybdopterin</name>
        <dbReference type="ChEBI" id="CHEBI:71302"/>
    </ligand>
    <ligandPart>
        <name>Mo</name>
        <dbReference type="ChEBI" id="CHEBI:28685"/>
    </ligandPart>
</feature>
<feature type="binding site" evidence="1">
    <location>
        <position position="836"/>
    </location>
    <ligand>
        <name>Mo-molybdopterin</name>
        <dbReference type="ChEBI" id="CHEBI:71302"/>
    </ligand>
    <ligandPart>
        <name>Mo</name>
        <dbReference type="ChEBI" id="CHEBI:28685"/>
    </ligandPart>
</feature>
<feature type="binding site" evidence="1">
    <location>
        <position position="840"/>
    </location>
    <ligand>
        <name>substrate</name>
    </ligand>
</feature>
<feature type="binding site" evidence="1">
    <location>
        <position position="918"/>
    </location>
    <ligand>
        <name>substrate</name>
    </ligand>
</feature>
<feature type="binding site" evidence="1">
    <location>
        <position position="950"/>
    </location>
    <ligand>
        <name>Mo-molybdopterin</name>
        <dbReference type="ChEBI" id="CHEBI:71302"/>
    </ligand>
    <ligandPart>
        <name>Mo</name>
        <dbReference type="ChEBI" id="CHEBI:28685"/>
    </ligandPart>
</feature>
<feature type="binding site" evidence="1">
    <location>
        <position position="952"/>
    </location>
    <ligand>
        <name>substrate</name>
    </ligand>
</feature>
<feature type="binding site" evidence="1">
    <location>
        <position position="1048"/>
    </location>
    <ligand>
        <name>substrate</name>
    </ligand>
</feature>
<feature type="binding site" evidence="1">
    <location>
        <position position="1117"/>
    </location>
    <ligand>
        <name>Mo-molybdopterin</name>
        <dbReference type="ChEBI" id="CHEBI:71302"/>
    </ligand>
    <ligandPart>
        <name>Mo</name>
        <dbReference type="ChEBI" id="CHEBI:28685"/>
    </ligandPart>
</feature>
<evidence type="ECO:0000250" key="1"/>
<evidence type="ECO:0000250" key="2">
    <source>
        <dbReference type="UniProtKB" id="P22985"/>
    </source>
</evidence>
<evidence type="ECO:0000255" key="3">
    <source>
        <dbReference type="PROSITE-ProRule" id="PRU00465"/>
    </source>
</evidence>
<evidence type="ECO:0000255" key="4">
    <source>
        <dbReference type="PROSITE-ProRule" id="PRU00718"/>
    </source>
</evidence>
<evidence type="ECO:0000305" key="5"/>
<keyword id="KW-0001">2Fe-2S</keyword>
<keyword id="KW-0274">FAD</keyword>
<keyword id="KW-0285">Flavoprotein</keyword>
<keyword id="KW-0408">Iron</keyword>
<keyword id="KW-0411">Iron-sulfur</keyword>
<keyword id="KW-0479">Metal-binding</keyword>
<keyword id="KW-0500">Molybdenum</keyword>
<keyword id="KW-0520">NAD</keyword>
<keyword id="KW-0560">Oxidoreductase</keyword>
<keyword id="KW-0576">Peroxisome</keyword>
<keyword id="KW-1185">Reference proteome</keyword>
<proteinExistence type="inferred from homology"/>